<sequence>MLFSKLFAPTLKEPPKDAVLKSHKHLAQAGYIYQVGSGIYNFLPLAKKVLDKIENITHKRMQEHGAQNILMSFVVLASLWEKSGRLDKYGKELLVFKDRKDNDFVLSPTLEENITEIAANFIKSYKQLPVHLYQIHTKFRDEIRPRFGLVRAREFIMKDGYSFHEDAESLDKEFLNTQSAYKEILNDLGLDFRIVEADSGAIGGSKSKEFVVLTECGEDTIVVCKNCDYAANIEIAKRSKRPEPLNVPKAQLAKFPTPNTTSAQSVAEFFKTEPYFVLKALVRKVIHKDKETLACFFVRGDDNLEEVKALNALNIIGANALELREASQKDLDSAGLIAGFIGPYGLKKHVPYIIFDEDLKEGDCLITGANEKDFHAVGVDLKGFENLVYADIVQVKESDHCPNCQGALKYHKSLEVGHIFKLGQGYAKSLRASFLDKNGKEQFFEMGCYGIGISRLLSAILEQKSDDLGCVWTKNTAPFDVVIVVSNWKDEAQKKLAFEVYERLLQKGVDALLDDRDARFGAKMRDFELIGERLALIIGKQTLENKEFECIKRANLEKQTIKDIELEEKILEMLASE</sequence>
<reference key="1">
    <citation type="journal article" date="2006" name="Proc. Natl. Acad. Sci. U.S.A.">
        <title>The complete genome sequence of a chronic atrophic gastritis Helicobacter pylori strain: evolution during disease progression.</title>
        <authorList>
            <person name="Oh J.D."/>
            <person name="Kling-Baeckhed H."/>
            <person name="Giannakis M."/>
            <person name="Xu J."/>
            <person name="Fulton R.S."/>
            <person name="Fulton L.A."/>
            <person name="Cordum H.S."/>
            <person name="Wang C."/>
            <person name="Elliott G."/>
            <person name="Edwards J."/>
            <person name="Mardis E.R."/>
            <person name="Engstrand L.G."/>
            <person name="Gordon J.I."/>
        </authorList>
    </citation>
    <scope>NUCLEOTIDE SEQUENCE [LARGE SCALE GENOMIC DNA]</scope>
    <source>
        <strain>HPAG1</strain>
    </source>
</reference>
<feature type="chain" id="PRO_0000288333" description="Proline--tRNA ligase">
    <location>
        <begin position="1"/>
        <end position="577"/>
    </location>
</feature>
<gene>
    <name evidence="1" type="primary">proS</name>
    <name type="ordered locus">HPAG1_0241</name>
</gene>
<organism>
    <name type="scientific">Helicobacter pylori (strain HPAG1)</name>
    <dbReference type="NCBI Taxonomy" id="357544"/>
    <lineage>
        <taxon>Bacteria</taxon>
        <taxon>Pseudomonadati</taxon>
        <taxon>Campylobacterota</taxon>
        <taxon>Epsilonproteobacteria</taxon>
        <taxon>Campylobacterales</taxon>
        <taxon>Helicobacteraceae</taxon>
        <taxon>Helicobacter</taxon>
    </lineage>
</organism>
<evidence type="ECO:0000255" key="1">
    <source>
        <dbReference type="HAMAP-Rule" id="MF_01569"/>
    </source>
</evidence>
<dbReference type="EC" id="6.1.1.15" evidence="1"/>
<dbReference type="EMBL" id="CP000241">
    <property type="protein sequence ID" value="ABF84308.1"/>
    <property type="molecule type" value="Genomic_DNA"/>
</dbReference>
<dbReference type="RefSeq" id="WP_000899223.1">
    <property type="nucleotide sequence ID" value="NC_008086.1"/>
</dbReference>
<dbReference type="SMR" id="Q1CUR4"/>
<dbReference type="KEGG" id="hpa:HPAG1_0241"/>
<dbReference type="HOGENOM" id="CLU_016739_0_0_7"/>
<dbReference type="GO" id="GO:0005829">
    <property type="term" value="C:cytosol"/>
    <property type="evidence" value="ECO:0007669"/>
    <property type="project" value="TreeGrafter"/>
</dbReference>
<dbReference type="GO" id="GO:0002161">
    <property type="term" value="F:aminoacyl-tRNA deacylase activity"/>
    <property type="evidence" value="ECO:0007669"/>
    <property type="project" value="InterPro"/>
</dbReference>
<dbReference type="GO" id="GO:0005524">
    <property type="term" value="F:ATP binding"/>
    <property type="evidence" value="ECO:0007669"/>
    <property type="project" value="UniProtKB-UniRule"/>
</dbReference>
<dbReference type="GO" id="GO:0004827">
    <property type="term" value="F:proline-tRNA ligase activity"/>
    <property type="evidence" value="ECO:0007669"/>
    <property type="project" value="UniProtKB-UniRule"/>
</dbReference>
<dbReference type="GO" id="GO:0006433">
    <property type="term" value="P:prolyl-tRNA aminoacylation"/>
    <property type="evidence" value="ECO:0007669"/>
    <property type="project" value="UniProtKB-UniRule"/>
</dbReference>
<dbReference type="CDD" id="cd04334">
    <property type="entry name" value="ProRS-INS"/>
    <property type="match status" value="1"/>
</dbReference>
<dbReference type="CDD" id="cd00861">
    <property type="entry name" value="ProRS_anticodon_short"/>
    <property type="match status" value="1"/>
</dbReference>
<dbReference type="CDD" id="cd00779">
    <property type="entry name" value="ProRS_core_prok"/>
    <property type="match status" value="1"/>
</dbReference>
<dbReference type="FunFam" id="3.30.930.10:FF:000065">
    <property type="entry name" value="Proline--tRNA ligase"/>
    <property type="match status" value="1"/>
</dbReference>
<dbReference type="FunFam" id="3.30.930.10:FF:000066">
    <property type="entry name" value="Proline--tRNA ligase"/>
    <property type="match status" value="1"/>
</dbReference>
<dbReference type="FunFam" id="3.40.50.800:FF:000051">
    <property type="entry name" value="Proline--tRNA ligase"/>
    <property type="match status" value="1"/>
</dbReference>
<dbReference type="Gene3D" id="3.40.50.800">
    <property type="entry name" value="Anticodon-binding domain"/>
    <property type="match status" value="1"/>
</dbReference>
<dbReference type="Gene3D" id="3.30.930.10">
    <property type="entry name" value="Bira Bifunctional Protein, Domain 2"/>
    <property type="match status" value="2"/>
</dbReference>
<dbReference type="HAMAP" id="MF_01569">
    <property type="entry name" value="Pro_tRNA_synth_type1"/>
    <property type="match status" value="1"/>
</dbReference>
<dbReference type="InterPro" id="IPR002314">
    <property type="entry name" value="aa-tRNA-synt_IIb"/>
</dbReference>
<dbReference type="InterPro" id="IPR006195">
    <property type="entry name" value="aa-tRNA-synth_II"/>
</dbReference>
<dbReference type="InterPro" id="IPR045864">
    <property type="entry name" value="aa-tRNA-synth_II/BPL/LPL"/>
</dbReference>
<dbReference type="InterPro" id="IPR004154">
    <property type="entry name" value="Anticodon-bd"/>
</dbReference>
<dbReference type="InterPro" id="IPR036621">
    <property type="entry name" value="Anticodon-bd_dom_sf"/>
</dbReference>
<dbReference type="InterPro" id="IPR002316">
    <property type="entry name" value="Pro-tRNA-ligase_IIa"/>
</dbReference>
<dbReference type="InterPro" id="IPR004500">
    <property type="entry name" value="Pro-tRNA-synth_IIa_bac-type"/>
</dbReference>
<dbReference type="InterPro" id="IPR023717">
    <property type="entry name" value="Pro-tRNA-Synthase_IIa_type1"/>
</dbReference>
<dbReference type="InterPro" id="IPR050062">
    <property type="entry name" value="Pro-tRNA_synthetase"/>
</dbReference>
<dbReference type="InterPro" id="IPR044140">
    <property type="entry name" value="ProRS_anticodon_short"/>
</dbReference>
<dbReference type="InterPro" id="IPR033730">
    <property type="entry name" value="ProRS_core_prok"/>
</dbReference>
<dbReference type="InterPro" id="IPR036754">
    <property type="entry name" value="YbaK/aa-tRNA-synt-asso_dom_sf"/>
</dbReference>
<dbReference type="InterPro" id="IPR007214">
    <property type="entry name" value="YbaK/aa-tRNA-synth-assoc-dom"/>
</dbReference>
<dbReference type="NCBIfam" id="NF006625">
    <property type="entry name" value="PRK09194.1"/>
    <property type="match status" value="1"/>
</dbReference>
<dbReference type="NCBIfam" id="TIGR00409">
    <property type="entry name" value="proS_fam_II"/>
    <property type="match status" value="1"/>
</dbReference>
<dbReference type="PANTHER" id="PTHR42753">
    <property type="entry name" value="MITOCHONDRIAL RIBOSOME PROTEIN L39/PROLYL-TRNA LIGASE FAMILY MEMBER"/>
    <property type="match status" value="1"/>
</dbReference>
<dbReference type="PANTHER" id="PTHR42753:SF2">
    <property type="entry name" value="PROLINE--TRNA LIGASE"/>
    <property type="match status" value="1"/>
</dbReference>
<dbReference type="Pfam" id="PF03129">
    <property type="entry name" value="HGTP_anticodon"/>
    <property type="match status" value="1"/>
</dbReference>
<dbReference type="Pfam" id="PF00587">
    <property type="entry name" value="tRNA-synt_2b"/>
    <property type="match status" value="1"/>
</dbReference>
<dbReference type="Pfam" id="PF04073">
    <property type="entry name" value="tRNA_edit"/>
    <property type="match status" value="1"/>
</dbReference>
<dbReference type="PRINTS" id="PR01046">
    <property type="entry name" value="TRNASYNTHPRO"/>
</dbReference>
<dbReference type="SUPFAM" id="SSF52954">
    <property type="entry name" value="Class II aaRS ABD-related"/>
    <property type="match status" value="1"/>
</dbReference>
<dbReference type="SUPFAM" id="SSF55681">
    <property type="entry name" value="Class II aaRS and biotin synthetases"/>
    <property type="match status" value="1"/>
</dbReference>
<dbReference type="SUPFAM" id="SSF55826">
    <property type="entry name" value="YbaK/ProRS associated domain"/>
    <property type="match status" value="1"/>
</dbReference>
<dbReference type="PROSITE" id="PS50862">
    <property type="entry name" value="AA_TRNA_LIGASE_II"/>
    <property type="match status" value="1"/>
</dbReference>
<accession>Q1CUR4</accession>
<protein>
    <recommendedName>
        <fullName evidence="1">Proline--tRNA ligase</fullName>
        <ecNumber evidence="1">6.1.1.15</ecNumber>
    </recommendedName>
    <alternativeName>
        <fullName evidence="1">Prolyl-tRNA synthetase</fullName>
        <shortName evidence="1">ProRS</shortName>
    </alternativeName>
</protein>
<keyword id="KW-0030">Aminoacyl-tRNA synthetase</keyword>
<keyword id="KW-0067">ATP-binding</keyword>
<keyword id="KW-0963">Cytoplasm</keyword>
<keyword id="KW-0436">Ligase</keyword>
<keyword id="KW-0547">Nucleotide-binding</keyword>
<keyword id="KW-0648">Protein biosynthesis</keyword>
<proteinExistence type="inferred from homology"/>
<comment type="function">
    <text evidence="1">Catalyzes the attachment of proline to tRNA(Pro) in a two-step reaction: proline is first activated by ATP to form Pro-AMP and then transferred to the acceptor end of tRNA(Pro). As ProRS can inadvertently accommodate and process non-cognate amino acids such as alanine and cysteine, to avoid such errors it has two additional distinct editing activities against alanine. One activity is designated as 'pretransfer' editing and involves the tRNA(Pro)-independent hydrolysis of activated Ala-AMP. The other activity is designated 'posttransfer' editing and involves deacylation of mischarged Ala-tRNA(Pro). The misacylated Cys-tRNA(Pro) is not edited by ProRS.</text>
</comment>
<comment type="catalytic activity">
    <reaction evidence="1">
        <text>tRNA(Pro) + L-proline + ATP = L-prolyl-tRNA(Pro) + AMP + diphosphate</text>
        <dbReference type="Rhea" id="RHEA:14305"/>
        <dbReference type="Rhea" id="RHEA-COMP:9700"/>
        <dbReference type="Rhea" id="RHEA-COMP:9702"/>
        <dbReference type="ChEBI" id="CHEBI:30616"/>
        <dbReference type="ChEBI" id="CHEBI:33019"/>
        <dbReference type="ChEBI" id="CHEBI:60039"/>
        <dbReference type="ChEBI" id="CHEBI:78442"/>
        <dbReference type="ChEBI" id="CHEBI:78532"/>
        <dbReference type="ChEBI" id="CHEBI:456215"/>
        <dbReference type="EC" id="6.1.1.15"/>
    </reaction>
</comment>
<comment type="subunit">
    <text evidence="1">Homodimer.</text>
</comment>
<comment type="subcellular location">
    <subcellularLocation>
        <location evidence="1">Cytoplasm</location>
    </subcellularLocation>
</comment>
<comment type="domain">
    <text evidence="1">Consists of three domains: the N-terminal catalytic domain, the editing domain and the C-terminal anticodon-binding domain.</text>
</comment>
<comment type="similarity">
    <text evidence="1">Belongs to the class-II aminoacyl-tRNA synthetase family. ProS type 1 subfamily.</text>
</comment>
<name>SYP_HELPH</name>